<reference key="1">
    <citation type="journal article" date="1989" name="FEBS Lett.">
        <title>The nucleotide sequence of the genes coding for the S19 and L22 equivalent ribosomal proteins from Halobacterium halobium.</title>
        <authorList>
            <person name="Mankin A.S."/>
        </authorList>
    </citation>
    <scope>NUCLEOTIDE SEQUENCE [GENOMIC DNA]</scope>
</reference>
<reference key="2">
    <citation type="journal article" date="1996" name="Biochem. Mol. Biol. Int.">
        <title>Organization and nucleotide sequences of ten ribosomal protein genes from the region equivalent to the S10 operon in the archaebacterium, Halobacterium halobium.</title>
        <authorList>
            <person name="Miyokawa T."/>
            <person name="Urayama T."/>
            <person name="Shimooka K."/>
            <person name="Itoh T."/>
        </authorList>
    </citation>
    <scope>NUCLEOTIDE SEQUENCE [GENOMIC DNA]</scope>
</reference>
<reference key="3">
    <citation type="submission" date="1997-09" db="EMBL/GenBank/DDBJ databases">
        <authorList>
            <person name="Itoh T."/>
        </authorList>
    </citation>
    <scope>SEQUENCE REVISION</scope>
</reference>
<reference key="4">
    <citation type="journal article" date="2000" name="Proc. Natl. Acad. Sci. U.S.A.">
        <title>Genome sequence of Halobacterium species NRC-1.</title>
        <authorList>
            <person name="Ng W.V."/>
            <person name="Kennedy S.P."/>
            <person name="Mahairas G.G."/>
            <person name="Berquist B."/>
            <person name="Pan M."/>
            <person name="Shukla H.D."/>
            <person name="Lasky S.R."/>
            <person name="Baliga N.S."/>
            <person name="Thorsson V."/>
            <person name="Sbrogna J."/>
            <person name="Swartzell S."/>
            <person name="Weir D."/>
            <person name="Hall J."/>
            <person name="Dahl T.A."/>
            <person name="Welti R."/>
            <person name="Goo Y.A."/>
            <person name="Leithauser B."/>
            <person name="Keller K."/>
            <person name="Cruz R."/>
            <person name="Danson M.J."/>
            <person name="Hough D.W."/>
            <person name="Maddocks D.G."/>
            <person name="Jablonski P.E."/>
            <person name="Krebs M.P."/>
            <person name="Angevine C.M."/>
            <person name="Dale H."/>
            <person name="Isenbarger T.A."/>
            <person name="Peck R.F."/>
            <person name="Pohlschroder M."/>
            <person name="Spudich J.L."/>
            <person name="Jung K.-H."/>
            <person name="Alam M."/>
            <person name="Freitas T."/>
            <person name="Hou S."/>
            <person name="Daniels C.J."/>
            <person name="Dennis P.P."/>
            <person name="Omer A.D."/>
            <person name="Ebhardt H."/>
            <person name="Lowe T.M."/>
            <person name="Liang P."/>
            <person name="Riley M."/>
            <person name="Hood L."/>
            <person name="DasSarma S."/>
        </authorList>
    </citation>
    <scope>NUCLEOTIDE SEQUENCE [LARGE SCALE GENOMIC DNA]</scope>
    <source>
        <strain>ATCC 700922 / JCM 11081 / NRC-1</strain>
    </source>
</reference>
<keyword id="KW-1185">Reference proteome</keyword>
<keyword id="KW-0687">Ribonucleoprotein</keyword>
<keyword id="KW-0689">Ribosomal protein</keyword>
<keyword id="KW-0694">RNA-binding</keyword>
<keyword id="KW-0699">rRNA-binding</keyword>
<evidence type="ECO:0000250" key="1"/>
<evidence type="ECO:0000256" key="2">
    <source>
        <dbReference type="SAM" id="MobiDB-lite"/>
    </source>
</evidence>
<evidence type="ECO:0000305" key="3"/>
<proteinExistence type="inferred from homology"/>
<protein>
    <recommendedName>
        <fullName evidence="3">Small ribosomal subunit protein uS19</fullName>
    </recommendedName>
    <alternativeName>
        <fullName>30S ribosomal protein S19</fullName>
    </alternativeName>
    <alternativeName>
        <fullName>HHAS19</fullName>
    </alternativeName>
</protein>
<accession>P15010</accession>
<accession>Q9HPD0</accession>
<organism>
    <name type="scientific">Halobacterium salinarum (strain ATCC 700922 / JCM 11081 / NRC-1)</name>
    <name type="common">Halobacterium halobium</name>
    <dbReference type="NCBI Taxonomy" id="64091"/>
    <lineage>
        <taxon>Archaea</taxon>
        <taxon>Methanobacteriati</taxon>
        <taxon>Methanobacteriota</taxon>
        <taxon>Stenosarchaea group</taxon>
        <taxon>Halobacteria</taxon>
        <taxon>Halobacteriales</taxon>
        <taxon>Halobacteriaceae</taxon>
        <taxon>Halobacterium</taxon>
        <taxon>Halobacterium salinarum NRC-34001</taxon>
    </lineage>
</organism>
<name>RS19_HALSA</name>
<sequence>MSTEYRTGREGEFTYRGHDLDELQEMSLEDVAELLPARQRRTITRGLSEEHHKVLAEARESGTEETANNPIRTHLRDMPVLPEFVGLTFAVYTGQEFERVEVQPEMIGHYLGEFQLTRSSVEHGQAGIGATRSSKFVPLK</sequence>
<feature type="chain" id="PRO_0000130000" description="Small ribosomal subunit protein uS19">
    <location>
        <begin position="1"/>
        <end position="140"/>
    </location>
</feature>
<feature type="region of interest" description="Disordered" evidence="2">
    <location>
        <begin position="55"/>
        <end position="74"/>
    </location>
</feature>
<dbReference type="EMBL" id="X14967">
    <property type="protein sequence ID" value="CAA33091.1"/>
    <property type="status" value="ALT_INIT"/>
    <property type="molecule type" value="Genomic_DNA"/>
</dbReference>
<dbReference type="EMBL" id="AB006961">
    <property type="protein sequence ID" value="BAA22274.1"/>
    <property type="molecule type" value="Genomic_DNA"/>
</dbReference>
<dbReference type="EMBL" id="AE004437">
    <property type="protein sequence ID" value="AAG19940.1"/>
    <property type="molecule type" value="Genomic_DNA"/>
</dbReference>
<dbReference type="PIR" id="H84321">
    <property type="entry name" value="H84321"/>
</dbReference>
<dbReference type="PIR" id="T43820">
    <property type="entry name" value="R3HS9H"/>
</dbReference>
<dbReference type="RefSeq" id="WP_010903238.1">
    <property type="nucleotide sequence ID" value="NC_002607.1"/>
</dbReference>
<dbReference type="SMR" id="P15010"/>
<dbReference type="FunCoup" id="P15010">
    <property type="interactions" value="120"/>
</dbReference>
<dbReference type="STRING" id="64091.VNG_1693G"/>
<dbReference type="PaxDb" id="64091-VNG_1693G"/>
<dbReference type="KEGG" id="hal:VNG_1693G"/>
<dbReference type="PATRIC" id="fig|64091.14.peg.1292"/>
<dbReference type="HOGENOM" id="CLU_097347_1_0_2"/>
<dbReference type="InParanoid" id="P15010"/>
<dbReference type="OrthoDB" id="30559at2157"/>
<dbReference type="PhylomeDB" id="P15010"/>
<dbReference type="Proteomes" id="UP000000554">
    <property type="component" value="Chromosome"/>
</dbReference>
<dbReference type="GO" id="GO:0022627">
    <property type="term" value="C:cytosolic small ribosomal subunit"/>
    <property type="evidence" value="ECO:0000318"/>
    <property type="project" value="GO_Central"/>
</dbReference>
<dbReference type="GO" id="GO:0019843">
    <property type="term" value="F:rRNA binding"/>
    <property type="evidence" value="ECO:0007669"/>
    <property type="project" value="UniProtKB-UniRule"/>
</dbReference>
<dbReference type="GO" id="GO:0003735">
    <property type="term" value="F:structural constituent of ribosome"/>
    <property type="evidence" value="ECO:0000318"/>
    <property type="project" value="GO_Central"/>
</dbReference>
<dbReference type="GO" id="GO:0000028">
    <property type="term" value="P:ribosomal small subunit assembly"/>
    <property type="evidence" value="ECO:0000318"/>
    <property type="project" value="GO_Central"/>
</dbReference>
<dbReference type="GO" id="GO:0006412">
    <property type="term" value="P:translation"/>
    <property type="evidence" value="ECO:0007669"/>
    <property type="project" value="UniProtKB-UniRule"/>
</dbReference>
<dbReference type="FunFam" id="3.30.860.10:FF:000002">
    <property type="entry name" value="40S ribosomal protein S15"/>
    <property type="match status" value="1"/>
</dbReference>
<dbReference type="Gene3D" id="3.30.860.10">
    <property type="entry name" value="30s Ribosomal Protein S19, Chain A"/>
    <property type="match status" value="1"/>
</dbReference>
<dbReference type="HAMAP" id="MF_00531">
    <property type="entry name" value="Ribosomal_uS19"/>
    <property type="match status" value="1"/>
</dbReference>
<dbReference type="InterPro" id="IPR002222">
    <property type="entry name" value="Ribosomal_uS19"/>
</dbReference>
<dbReference type="InterPro" id="IPR020934">
    <property type="entry name" value="Ribosomal_uS19_CS"/>
</dbReference>
<dbReference type="InterPro" id="IPR005713">
    <property type="entry name" value="Ribosomal_uS19_euk/arc"/>
</dbReference>
<dbReference type="InterPro" id="IPR023575">
    <property type="entry name" value="Ribosomal_uS19_SF"/>
</dbReference>
<dbReference type="NCBIfam" id="NF003121">
    <property type="entry name" value="PRK04038.1"/>
    <property type="match status" value="1"/>
</dbReference>
<dbReference type="NCBIfam" id="TIGR01025">
    <property type="entry name" value="uS19_arch"/>
    <property type="match status" value="1"/>
</dbReference>
<dbReference type="PANTHER" id="PTHR11880">
    <property type="entry name" value="RIBOSOMAL PROTEIN S19P FAMILY MEMBER"/>
    <property type="match status" value="1"/>
</dbReference>
<dbReference type="PANTHER" id="PTHR11880:SF2">
    <property type="entry name" value="SMALL RIBOSOMAL SUBUNIT PROTEIN US19"/>
    <property type="match status" value="1"/>
</dbReference>
<dbReference type="Pfam" id="PF00203">
    <property type="entry name" value="Ribosomal_S19"/>
    <property type="match status" value="1"/>
</dbReference>
<dbReference type="PIRSF" id="PIRSF002144">
    <property type="entry name" value="Ribosomal_S19"/>
    <property type="match status" value="1"/>
</dbReference>
<dbReference type="PRINTS" id="PR00975">
    <property type="entry name" value="RIBOSOMALS19"/>
</dbReference>
<dbReference type="SUPFAM" id="SSF54570">
    <property type="entry name" value="Ribosomal protein S19"/>
    <property type="match status" value="1"/>
</dbReference>
<dbReference type="PROSITE" id="PS00323">
    <property type="entry name" value="RIBOSOMAL_S19"/>
    <property type="match status" value="1"/>
</dbReference>
<gene>
    <name type="primary">rps19</name>
    <name type="ordered locus">VNG_1693G</name>
</gene>
<comment type="function">
    <text evidence="1">Protein S19 forms a complex with S13 that binds strongly to the 16S ribosomal RNA.</text>
</comment>
<comment type="similarity">
    <text evidence="3">Belongs to the universal ribosomal protein uS19 family.</text>
</comment>
<comment type="sequence caution" evidence="3">
    <conflict type="erroneous initiation">
        <sequence resource="EMBL-CDS" id="CAA33091"/>
    </conflict>
</comment>